<dbReference type="EMBL" id="Z49821">
    <property type="status" value="NOT_ANNOTATED_CDS"/>
    <property type="molecule type" value="Genomic_DNA"/>
</dbReference>
<dbReference type="EMBL" id="Z75243">
    <property type="status" value="NOT_ANNOTATED_CDS"/>
    <property type="molecule type" value="Genomic_DNA"/>
</dbReference>
<dbReference type="EMBL" id="AF479981">
    <property type="protein sequence ID" value="AAL79294.1"/>
    <property type="molecule type" value="Genomic_DNA"/>
</dbReference>
<dbReference type="STRING" id="4932.YOR335W-A"/>
<dbReference type="PaxDb" id="4932-YOR335W-A"/>
<dbReference type="EnsemblFungi" id="YOR335W-A_mRNA">
    <property type="protein sequence ID" value="YOR335W-A"/>
    <property type="gene ID" value="YOR335W-A"/>
</dbReference>
<dbReference type="AGR" id="SGD:S000028717"/>
<dbReference type="SGD" id="S000028717">
    <property type="gene designation" value="YOR335W-A"/>
</dbReference>
<dbReference type="HOGENOM" id="CLU_3417333_0_0_1"/>
<accession>Q8TGL1</accession>
<name>YO335_YEAST</name>
<feature type="chain" id="PRO_0000299739" description="Putative uncharacterized protein YOR335W-A">
    <location>
        <begin position="1"/>
        <end position="26"/>
    </location>
</feature>
<reference key="1">
    <citation type="journal article" date="1996" name="Yeast">
        <title>Sequence of 29 kb around the PDR10 locus on the right arm of Saccharomyces cerevisiae chromosome XV: similarity to part of chromosome I.</title>
        <authorList>
            <person name="Parle-McDermott A.G."/>
            <person name="Hand N.J."/>
            <person name="Goulding S.E."/>
            <person name="Wolfe K.H."/>
        </authorList>
    </citation>
    <scope>NUCLEOTIDE SEQUENCE [GENOMIC DNA]</scope>
    <source>
        <strain>ATCC 96604 / S288c / FY1679</strain>
    </source>
</reference>
<reference key="2">
    <citation type="journal article" date="1997" name="Nature">
        <title>The nucleotide sequence of Saccharomyces cerevisiae chromosome XV.</title>
        <authorList>
            <person name="Dujon B."/>
            <person name="Albermann K."/>
            <person name="Aldea M."/>
            <person name="Alexandraki D."/>
            <person name="Ansorge W."/>
            <person name="Arino J."/>
            <person name="Benes V."/>
            <person name="Bohn C."/>
            <person name="Bolotin-Fukuhara M."/>
            <person name="Bordonne R."/>
            <person name="Boyer J."/>
            <person name="Camasses A."/>
            <person name="Casamayor A."/>
            <person name="Casas C."/>
            <person name="Cheret G."/>
            <person name="Cziepluch C."/>
            <person name="Daignan-Fornier B."/>
            <person name="Dang V.-D."/>
            <person name="de Haan M."/>
            <person name="Delius H."/>
            <person name="Durand P."/>
            <person name="Fairhead C."/>
            <person name="Feldmann H."/>
            <person name="Gaillon L."/>
            <person name="Galisson F."/>
            <person name="Gamo F.-J."/>
            <person name="Gancedo C."/>
            <person name="Goffeau A."/>
            <person name="Goulding S.E."/>
            <person name="Grivell L.A."/>
            <person name="Habbig B."/>
            <person name="Hand N.J."/>
            <person name="Hani J."/>
            <person name="Hattenhorst U."/>
            <person name="Hebling U."/>
            <person name="Hernando Y."/>
            <person name="Herrero E."/>
            <person name="Heumann K."/>
            <person name="Hiesel R."/>
            <person name="Hilger F."/>
            <person name="Hofmann B."/>
            <person name="Hollenberg C.P."/>
            <person name="Hughes B."/>
            <person name="Jauniaux J.-C."/>
            <person name="Kalogeropoulos A."/>
            <person name="Katsoulou C."/>
            <person name="Kordes E."/>
            <person name="Lafuente M.J."/>
            <person name="Landt O."/>
            <person name="Louis E.J."/>
            <person name="Maarse A.C."/>
            <person name="Madania A."/>
            <person name="Mannhaupt G."/>
            <person name="Marck C."/>
            <person name="Martin R.P."/>
            <person name="Mewes H.-W."/>
            <person name="Michaux G."/>
            <person name="Paces V."/>
            <person name="Parle-McDermott A.G."/>
            <person name="Pearson B.M."/>
            <person name="Perrin A."/>
            <person name="Pettersson B."/>
            <person name="Poch O."/>
            <person name="Pohl T.M."/>
            <person name="Poirey R."/>
            <person name="Portetelle D."/>
            <person name="Pujol A."/>
            <person name="Purnelle B."/>
            <person name="Ramezani Rad M."/>
            <person name="Rechmann S."/>
            <person name="Schwager C."/>
            <person name="Schweizer M."/>
            <person name="Sor F."/>
            <person name="Sterky F."/>
            <person name="Tarassov I.A."/>
            <person name="Teodoru C."/>
            <person name="Tettelin H."/>
            <person name="Thierry A."/>
            <person name="Tobiasch E."/>
            <person name="Tzermia M."/>
            <person name="Uhlen M."/>
            <person name="Unseld M."/>
            <person name="Valens M."/>
            <person name="Vandenbol M."/>
            <person name="Vetter I."/>
            <person name="Vlcek C."/>
            <person name="Voet M."/>
            <person name="Volckaert G."/>
            <person name="Voss H."/>
            <person name="Wambutt R."/>
            <person name="Wedler H."/>
            <person name="Wiemann S."/>
            <person name="Winsor B."/>
            <person name="Wolfe K.H."/>
            <person name="Zollner A."/>
            <person name="Zumstein E."/>
            <person name="Kleine K."/>
        </authorList>
    </citation>
    <scope>NUCLEOTIDE SEQUENCE [LARGE SCALE GENOMIC DNA]</scope>
    <source>
        <strain>ATCC 204508 / S288c</strain>
    </source>
</reference>
<reference key="3">
    <citation type="journal article" date="2014" name="G3 (Bethesda)">
        <title>The reference genome sequence of Saccharomyces cerevisiae: Then and now.</title>
        <authorList>
            <person name="Engel S.R."/>
            <person name="Dietrich F.S."/>
            <person name="Fisk D.G."/>
            <person name="Binkley G."/>
            <person name="Balakrishnan R."/>
            <person name="Costanzo M.C."/>
            <person name="Dwight S.S."/>
            <person name="Hitz B.C."/>
            <person name="Karra K."/>
            <person name="Nash R.S."/>
            <person name="Weng S."/>
            <person name="Wong E.D."/>
            <person name="Lloyd P."/>
            <person name="Skrzypek M.S."/>
            <person name="Miyasato S.R."/>
            <person name="Simison M."/>
            <person name="Cherry J.M."/>
        </authorList>
    </citation>
    <scope>GENOME REANNOTATION</scope>
    <source>
        <strain>ATCC 204508 / S288c</strain>
    </source>
</reference>
<reference key="4">
    <citation type="journal article" date="2002" name="Nat. Biotechnol.">
        <title>An integrated approach for finding overlooked genes in yeast.</title>
        <authorList>
            <person name="Kumar A."/>
            <person name="Harrison P.M."/>
            <person name="Cheung K.-H."/>
            <person name="Lan N."/>
            <person name="Echols N."/>
            <person name="Bertone P."/>
            <person name="Miller P."/>
            <person name="Gerstein M.B."/>
            <person name="Snyder M."/>
        </authorList>
    </citation>
    <scope>NUCLEOTIDE SEQUENCE [GENOMIC DNA]</scope>
</reference>
<organism>
    <name type="scientific">Saccharomyces cerevisiae (strain ATCC 204508 / S288c)</name>
    <name type="common">Baker's yeast</name>
    <dbReference type="NCBI Taxonomy" id="559292"/>
    <lineage>
        <taxon>Eukaryota</taxon>
        <taxon>Fungi</taxon>
        <taxon>Dikarya</taxon>
        <taxon>Ascomycota</taxon>
        <taxon>Saccharomycotina</taxon>
        <taxon>Saccharomycetes</taxon>
        <taxon>Saccharomycetales</taxon>
        <taxon>Saccharomycetaceae</taxon>
        <taxon>Saccharomyces</taxon>
    </lineage>
</organism>
<comment type="miscellaneous">
    <text evidence="1">Completely overlaps ALA1.</text>
</comment>
<comment type="caution">
    <text evidence="2">Product of a dubious gene prediction unlikely to encode a functional protein. Because of that it is not part of the S.cerevisiae S288c complete/reference proteome set.</text>
</comment>
<protein>
    <recommendedName>
        <fullName>Putative uncharacterized protein YOR335W-A</fullName>
    </recommendedName>
</protein>
<gene>
    <name type="ordered locus">YOR335W-A</name>
</gene>
<proteinExistence type="uncertain"/>
<evidence type="ECO:0000305" key="1"/>
<evidence type="ECO:0000305" key="2">
    <source>
    </source>
</evidence>
<sequence>MEHSHWFRKMSSLHQEFVCFLFWPLT</sequence>